<name>EF2_METM7</name>
<evidence type="ECO:0000255" key="1">
    <source>
        <dbReference type="HAMAP-Rule" id="MF_00054"/>
    </source>
</evidence>
<keyword id="KW-0963">Cytoplasm</keyword>
<keyword id="KW-0251">Elongation factor</keyword>
<keyword id="KW-0342">GTP-binding</keyword>
<keyword id="KW-0547">Nucleotide-binding</keyword>
<keyword id="KW-0648">Protein biosynthesis</keyword>
<feature type="chain" id="PRO_1000008847" description="Elongation factor 2">
    <location>
        <begin position="1"/>
        <end position="727"/>
    </location>
</feature>
<feature type="domain" description="tr-type G">
    <location>
        <begin position="19"/>
        <end position="260"/>
    </location>
</feature>
<feature type="binding site" evidence="1">
    <location>
        <begin position="28"/>
        <end position="35"/>
    </location>
    <ligand>
        <name>GTP</name>
        <dbReference type="ChEBI" id="CHEBI:37565"/>
    </ligand>
</feature>
<feature type="binding site" evidence="1">
    <location>
        <begin position="94"/>
        <end position="98"/>
    </location>
    <ligand>
        <name>GTP</name>
        <dbReference type="ChEBI" id="CHEBI:37565"/>
    </ligand>
</feature>
<feature type="binding site" evidence="1">
    <location>
        <begin position="148"/>
        <end position="151"/>
    </location>
    <ligand>
        <name>GTP</name>
        <dbReference type="ChEBI" id="CHEBI:37565"/>
    </ligand>
</feature>
<feature type="modified residue" description="Diphthamide" evidence="1">
    <location>
        <position position="603"/>
    </location>
</feature>
<proteinExistence type="inferred from homology"/>
<comment type="function">
    <text evidence="1">Catalyzes the GTP-dependent ribosomal translocation step during translation elongation. During this step, the ribosome changes from the pre-translocational (PRE) to the post-translocational (POST) state as the newly formed A-site-bound peptidyl-tRNA and P-site-bound deacylated tRNA move to the P and E sites, respectively. Catalyzes the coordinated movement of the two tRNA molecules, the mRNA and conformational changes in the ribosome.</text>
</comment>
<comment type="subcellular location">
    <subcellularLocation>
        <location evidence="1">Cytoplasm</location>
    </subcellularLocation>
</comment>
<comment type="similarity">
    <text evidence="1">Belongs to the TRAFAC class translation factor GTPase superfamily. Classic translation factor GTPase family. EF-G/EF-2 subfamily.</text>
</comment>
<organism>
    <name type="scientific">Methanococcus maripaludis (strain C7 / ATCC BAA-1331)</name>
    <dbReference type="NCBI Taxonomy" id="426368"/>
    <lineage>
        <taxon>Archaea</taxon>
        <taxon>Methanobacteriati</taxon>
        <taxon>Methanobacteriota</taxon>
        <taxon>Methanomada group</taxon>
        <taxon>Methanococci</taxon>
        <taxon>Methanococcales</taxon>
        <taxon>Methanococcaceae</taxon>
        <taxon>Methanococcus</taxon>
    </lineage>
</organism>
<protein>
    <recommendedName>
        <fullName evidence="1">Elongation factor 2</fullName>
        <shortName evidence="1">EF-2</shortName>
    </recommendedName>
</protein>
<reference key="1">
    <citation type="submission" date="2007-06" db="EMBL/GenBank/DDBJ databases">
        <title>Complete sequence of Methanococcus maripaludis C7.</title>
        <authorList>
            <consortium name="US DOE Joint Genome Institute"/>
            <person name="Copeland A."/>
            <person name="Lucas S."/>
            <person name="Lapidus A."/>
            <person name="Barry K."/>
            <person name="Glavina del Rio T."/>
            <person name="Dalin E."/>
            <person name="Tice H."/>
            <person name="Pitluck S."/>
            <person name="Clum A."/>
            <person name="Schmutz J."/>
            <person name="Larimer F."/>
            <person name="Land M."/>
            <person name="Hauser L."/>
            <person name="Kyrpides N."/>
            <person name="Anderson I."/>
            <person name="Sieprawska-Lupa M."/>
            <person name="Whitman W.B."/>
            <person name="Richardson P."/>
        </authorList>
    </citation>
    <scope>NUCLEOTIDE SEQUENCE [LARGE SCALE GENOMIC DNA]</scope>
    <source>
        <strain>C7 / ATCC BAA-1331</strain>
    </source>
</reference>
<dbReference type="EMBL" id="CP000745">
    <property type="protein sequence ID" value="ABR65681.1"/>
    <property type="molecule type" value="Genomic_DNA"/>
</dbReference>
<dbReference type="SMR" id="A6VGV5"/>
<dbReference type="STRING" id="426368.MmarC7_0614"/>
<dbReference type="KEGG" id="mmz:MmarC7_0614"/>
<dbReference type="eggNOG" id="arCOG01559">
    <property type="taxonomic scope" value="Archaea"/>
</dbReference>
<dbReference type="HOGENOM" id="CLU_002794_11_1_2"/>
<dbReference type="OrthoDB" id="6290at2157"/>
<dbReference type="GO" id="GO:0005829">
    <property type="term" value="C:cytosol"/>
    <property type="evidence" value="ECO:0007669"/>
    <property type="project" value="TreeGrafter"/>
</dbReference>
<dbReference type="GO" id="GO:1990904">
    <property type="term" value="C:ribonucleoprotein complex"/>
    <property type="evidence" value="ECO:0007669"/>
    <property type="project" value="TreeGrafter"/>
</dbReference>
<dbReference type="GO" id="GO:0005525">
    <property type="term" value="F:GTP binding"/>
    <property type="evidence" value="ECO:0007669"/>
    <property type="project" value="UniProtKB-UniRule"/>
</dbReference>
<dbReference type="GO" id="GO:0003924">
    <property type="term" value="F:GTPase activity"/>
    <property type="evidence" value="ECO:0007669"/>
    <property type="project" value="InterPro"/>
</dbReference>
<dbReference type="GO" id="GO:0003746">
    <property type="term" value="F:translation elongation factor activity"/>
    <property type="evidence" value="ECO:0007669"/>
    <property type="project" value="UniProtKB-UniRule"/>
</dbReference>
<dbReference type="CDD" id="cd01681">
    <property type="entry name" value="aeEF2_snRNP_like_IV"/>
    <property type="match status" value="1"/>
</dbReference>
<dbReference type="CDD" id="cd01885">
    <property type="entry name" value="EF2"/>
    <property type="match status" value="1"/>
</dbReference>
<dbReference type="CDD" id="cd16268">
    <property type="entry name" value="EF2_II"/>
    <property type="match status" value="1"/>
</dbReference>
<dbReference type="CDD" id="cd16261">
    <property type="entry name" value="EF2_snRNP_III"/>
    <property type="match status" value="1"/>
</dbReference>
<dbReference type="CDD" id="cd01514">
    <property type="entry name" value="Elongation_Factor_C"/>
    <property type="match status" value="1"/>
</dbReference>
<dbReference type="FunFam" id="3.40.50.300:FF:000684">
    <property type="entry name" value="Elongation factor 2"/>
    <property type="match status" value="1"/>
</dbReference>
<dbReference type="FunFam" id="3.30.70.240:FF:000001">
    <property type="entry name" value="Elongation factor G"/>
    <property type="match status" value="1"/>
</dbReference>
<dbReference type="FunFam" id="3.30.70.870:FF:000002">
    <property type="entry name" value="Translation elongation factor 2"/>
    <property type="match status" value="1"/>
</dbReference>
<dbReference type="Gene3D" id="3.30.230.10">
    <property type="match status" value="1"/>
</dbReference>
<dbReference type="Gene3D" id="3.30.70.240">
    <property type="match status" value="1"/>
</dbReference>
<dbReference type="Gene3D" id="3.30.70.870">
    <property type="entry name" value="Elongation Factor G (Translational Gtpase), domain 3"/>
    <property type="match status" value="1"/>
</dbReference>
<dbReference type="Gene3D" id="3.40.50.300">
    <property type="entry name" value="P-loop containing nucleotide triphosphate hydrolases"/>
    <property type="match status" value="1"/>
</dbReference>
<dbReference type="Gene3D" id="2.40.30.10">
    <property type="entry name" value="Translation factors"/>
    <property type="match status" value="1"/>
</dbReference>
<dbReference type="HAMAP" id="MF_00054_A">
    <property type="entry name" value="EF_G_EF_2_A"/>
    <property type="match status" value="1"/>
</dbReference>
<dbReference type="InterPro" id="IPR053905">
    <property type="entry name" value="EF-G-like_DII"/>
</dbReference>
<dbReference type="InterPro" id="IPR041095">
    <property type="entry name" value="EFG_II"/>
</dbReference>
<dbReference type="InterPro" id="IPR035647">
    <property type="entry name" value="EFG_III/V"/>
</dbReference>
<dbReference type="InterPro" id="IPR000640">
    <property type="entry name" value="EFG_V-like"/>
</dbReference>
<dbReference type="InterPro" id="IPR031157">
    <property type="entry name" value="G_TR_CS"/>
</dbReference>
<dbReference type="InterPro" id="IPR027417">
    <property type="entry name" value="P-loop_NTPase"/>
</dbReference>
<dbReference type="InterPro" id="IPR020568">
    <property type="entry name" value="Ribosomal_Su5_D2-typ_SF"/>
</dbReference>
<dbReference type="InterPro" id="IPR014721">
    <property type="entry name" value="Ribsml_uS5_D2-typ_fold_subgr"/>
</dbReference>
<dbReference type="InterPro" id="IPR005225">
    <property type="entry name" value="Small_GTP-bd"/>
</dbReference>
<dbReference type="InterPro" id="IPR000795">
    <property type="entry name" value="T_Tr_GTP-bd_dom"/>
</dbReference>
<dbReference type="InterPro" id="IPR009000">
    <property type="entry name" value="Transl_B-barrel_sf"/>
</dbReference>
<dbReference type="InterPro" id="IPR004543">
    <property type="entry name" value="Transl_elong_EFG/EF2_arc"/>
</dbReference>
<dbReference type="InterPro" id="IPR005517">
    <property type="entry name" value="Transl_elong_EFG/EF2_IV"/>
</dbReference>
<dbReference type="NCBIfam" id="TIGR00490">
    <property type="entry name" value="aEF-2"/>
    <property type="match status" value="1"/>
</dbReference>
<dbReference type="NCBIfam" id="TIGR00231">
    <property type="entry name" value="small_GTP"/>
    <property type="match status" value="1"/>
</dbReference>
<dbReference type="PANTHER" id="PTHR42908:SF3">
    <property type="entry name" value="ELONGATION FACTOR-LIKE GTPASE 1"/>
    <property type="match status" value="1"/>
</dbReference>
<dbReference type="PANTHER" id="PTHR42908">
    <property type="entry name" value="TRANSLATION ELONGATION FACTOR-RELATED"/>
    <property type="match status" value="1"/>
</dbReference>
<dbReference type="Pfam" id="PF22042">
    <property type="entry name" value="EF-G_D2"/>
    <property type="match status" value="1"/>
</dbReference>
<dbReference type="Pfam" id="PF00679">
    <property type="entry name" value="EFG_C"/>
    <property type="match status" value="1"/>
</dbReference>
<dbReference type="Pfam" id="PF14492">
    <property type="entry name" value="EFG_III"/>
    <property type="match status" value="1"/>
</dbReference>
<dbReference type="Pfam" id="PF03764">
    <property type="entry name" value="EFG_IV"/>
    <property type="match status" value="1"/>
</dbReference>
<dbReference type="Pfam" id="PF00009">
    <property type="entry name" value="GTP_EFTU"/>
    <property type="match status" value="1"/>
</dbReference>
<dbReference type="PRINTS" id="PR00315">
    <property type="entry name" value="ELONGATNFCT"/>
</dbReference>
<dbReference type="SMART" id="SM00838">
    <property type="entry name" value="EFG_C"/>
    <property type="match status" value="1"/>
</dbReference>
<dbReference type="SMART" id="SM00889">
    <property type="entry name" value="EFG_IV"/>
    <property type="match status" value="1"/>
</dbReference>
<dbReference type="SUPFAM" id="SSF54980">
    <property type="entry name" value="EF-G C-terminal domain-like"/>
    <property type="match status" value="2"/>
</dbReference>
<dbReference type="SUPFAM" id="SSF52540">
    <property type="entry name" value="P-loop containing nucleoside triphosphate hydrolases"/>
    <property type="match status" value="1"/>
</dbReference>
<dbReference type="SUPFAM" id="SSF54211">
    <property type="entry name" value="Ribosomal protein S5 domain 2-like"/>
    <property type="match status" value="1"/>
</dbReference>
<dbReference type="SUPFAM" id="SSF50447">
    <property type="entry name" value="Translation proteins"/>
    <property type="match status" value="1"/>
</dbReference>
<dbReference type="PROSITE" id="PS00301">
    <property type="entry name" value="G_TR_1"/>
    <property type="match status" value="1"/>
</dbReference>
<dbReference type="PROSITE" id="PS51722">
    <property type="entry name" value="G_TR_2"/>
    <property type="match status" value="1"/>
</dbReference>
<gene>
    <name evidence="1" type="primary">fusA</name>
    <name type="ordered locus">MmarC7_0614</name>
</gene>
<accession>A6VGV5</accession>
<sequence length="727" mass="80027">MGRRAKMVEKVKTLMEKHDQIRNMGICAHIDHGKTTLSDNLLAGAGMISKELAGDQLALDFDEEEAARGITIYAANVSMVHEYGGKEYLINLIDTPGHVDFGGDVTRAMRAIDGAVVVCCAVEGVMPQTETVLRQALKEKVKPVLFINKVDRLINELKLTPEELQGRFMKIIAEVNKLIEKMAPEEFKKEWLCDVVTGKVAFGSAYNNWAISVPYMQRSGISFKDIIDYCEQEKQGELADKAPLHEVILDMAIKHLPNPLQAQKYRIPNIWKGDAESEIGKSMVACDPNGPLAGVVTKIIVDKHAGAISACRLFSGRIKQGDDLYLVGSKQKARAQQVSIFMGAERVQVPSISAGNICALTGLREATAGETVCSPSEILEPGFESLTHTSEPVITVAIEAKNTKDLPKLIEILRQIAREDNTVRVEINEETGEHLISGMGELHIEVITNTKIGRDGGIEVDVGEPIVVYRETITGTSPEIEGKSPNKHNKLYMIAEPMDESVYAAYVEGKIHDEDYKKKTTADGEARLVEAGLDKDQAKKVMSIYNGNMIVNMTRGIVQLDEARELIIEGFKEGVRNGPLAAEKVQGVKIRLVDATFHEDAIHRGPAQIIPAVRFGVRDAVAQAKPVLLEPMQSVYINTPQDYMGDGMKEINNRRGQILDMEQEGDMSIIKSSVPVAEMFGFAGAIRGATQGRCLWSVEFSGFERVPAELQPKIAKQIRDRKGLKSE</sequence>